<comment type="catalytic activity">
    <reaction evidence="1">
        <text>urea + 2 H2O + H(+) = hydrogencarbonate + 2 NH4(+)</text>
        <dbReference type="Rhea" id="RHEA:20557"/>
        <dbReference type="ChEBI" id="CHEBI:15377"/>
        <dbReference type="ChEBI" id="CHEBI:15378"/>
        <dbReference type="ChEBI" id="CHEBI:16199"/>
        <dbReference type="ChEBI" id="CHEBI:17544"/>
        <dbReference type="ChEBI" id="CHEBI:28938"/>
        <dbReference type="EC" id="3.5.1.5"/>
    </reaction>
</comment>
<comment type="pathway">
    <text evidence="1">Nitrogen metabolism; urea degradation; CO(2) and NH(3) from urea (urease route): step 1/1.</text>
</comment>
<comment type="subunit">
    <text evidence="1">Heterotrimer of UreA (gamma), UreB (beta) and UreC (alpha) subunits. Three heterotrimers associate to form the active enzyme.</text>
</comment>
<comment type="subcellular location">
    <subcellularLocation>
        <location evidence="1">Cytoplasm</location>
    </subcellularLocation>
</comment>
<comment type="similarity">
    <text evidence="1">Belongs to the urease gamma subunit family.</text>
</comment>
<sequence>MHLSPQEKDKLLIVTAALLAERRLNRGLKLNHPEAVAWLSFLVLEGARDGKSVAELMQEGTTWLRQDQVMEGVPELVHEVQMEAVFPDGTKLVTLHDPIR</sequence>
<keyword id="KW-0963">Cytoplasm</keyword>
<keyword id="KW-0378">Hydrolase</keyword>
<organism>
    <name type="scientific">Synechococcus sp. (strain CC9605)</name>
    <dbReference type="NCBI Taxonomy" id="110662"/>
    <lineage>
        <taxon>Bacteria</taxon>
        <taxon>Bacillati</taxon>
        <taxon>Cyanobacteriota</taxon>
        <taxon>Cyanophyceae</taxon>
        <taxon>Synechococcales</taxon>
        <taxon>Synechococcaceae</taxon>
        <taxon>Synechococcus</taxon>
    </lineage>
</organism>
<name>URE3_SYNSC</name>
<feature type="chain" id="PRO_0000239916" description="Urease subunit gamma">
    <location>
        <begin position="1"/>
        <end position="100"/>
    </location>
</feature>
<evidence type="ECO:0000255" key="1">
    <source>
        <dbReference type="HAMAP-Rule" id="MF_00739"/>
    </source>
</evidence>
<dbReference type="EC" id="3.5.1.5" evidence="1"/>
<dbReference type="EMBL" id="CP000110">
    <property type="protein sequence ID" value="ABB36350.1"/>
    <property type="molecule type" value="Genomic_DNA"/>
</dbReference>
<dbReference type="RefSeq" id="WP_011365545.1">
    <property type="nucleotide sequence ID" value="NC_007516.1"/>
</dbReference>
<dbReference type="SMR" id="Q3AGD2"/>
<dbReference type="STRING" id="110662.Syncc9605_2625"/>
<dbReference type="KEGG" id="syd:Syncc9605_2625"/>
<dbReference type="eggNOG" id="COG0831">
    <property type="taxonomic scope" value="Bacteria"/>
</dbReference>
<dbReference type="HOGENOM" id="CLU_145825_1_0_3"/>
<dbReference type="OrthoDB" id="9793527at2"/>
<dbReference type="UniPathway" id="UPA00258">
    <property type="reaction ID" value="UER00370"/>
</dbReference>
<dbReference type="GO" id="GO:0005737">
    <property type="term" value="C:cytoplasm"/>
    <property type="evidence" value="ECO:0007669"/>
    <property type="project" value="UniProtKB-SubCell"/>
</dbReference>
<dbReference type="GO" id="GO:0016151">
    <property type="term" value="F:nickel cation binding"/>
    <property type="evidence" value="ECO:0007669"/>
    <property type="project" value="InterPro"/>
</dbReference>
<dbReference type="GO" id="GO:0009039">
    <property type="term" value="F:urease activity"/>
    <property type="evidence" value="ECO:0007669"/>
    <property type="project" value="UniProtKB-UniRule"/>
</dbReference>
<dbReference type="GO" id="GO:0043419">
    <property type="term" value="P:urea catabolic process"/>
    <property type="evidence" value="ECO:0007669"/>
    <property type="project" value="UniProtKB-UniRule"/>
</dbReference>
<dbReference type="CDD" id="cd00390">
    <property type="entry name" value="Urease_gamma"/>
    <property type="match status" value="1"/>
</dbReference>
<dbReference type="Gene3D" id="3.30.280.10">
    <property type="entry name" value="Urease, gamma-like subunit"/>
    <property type="match status" value="1"/>
</dbReference>
<dbReference type="HAMAP" id="MF_00739">
    <property type="entry name" value="Urease_gamma"/>
    <property type="match status" value="1"/>
</dbReference>
<dbReference type="InterPro" id="IPR012010">
    <property type="entry name" value="Urease_gamma"/>
</dbReference>
<dbReference type="InterPro" id="IPR002026">
    <property type="entry name" value="Urease_gamma/gamma-beta_su"/>
</dbReference>
<dbReference type="InterPro" id="IPR036463">
    <property type="entry name" value="Urease_gamma_sf"/>
</dbReference>
<dbReference type="InterPro" id="IPR050069">
    <property type="entry name" value="Urease_subunit"/>
</dbReference>
<dbReference type="NCBIfam" id="NF009712">
    <property type="entry name" value="PRK13241.1"/>
    <property type="match status" value="1"/>
</dbReference>
<dbReference type="NCBIfam" id="TIGR00193">
    <property type="entry name" value="urease_gam"/>
    <property type="match status" value="1"/>
</dbReference>
<dbReference type="PANTHER" id="PTHR33569">
    <property type="entry name" value="UREASE"/>
    <property type="match status" value="1"/>
</dbReference>
<dbReference type="PANTHER" id="PTHR33569:SF1">
    <property type="entry name" value="UREASE"/>
    <property type="match status" value="1"/>
</dbReference>
<dbReference type="Pfam" id="PF00547">
    <property type="entry name" value="Urease_gamma"/>
    <property type="match status" value="1"/>
</dbReference>
<dbReference type="PIRSF" id="PIRSF001223">
    <property type="entry name" value="Urease_gamma"/>
    <property type="match status" value="1"/>
</dbReference>
<dbReference type="SUPFAM" id="SSF54111">
    <property type="entry name" value="Urease, gamma-subunit"/>
    <property type="match status" value="1"/>
</dbReference>
<protein>
    <recommendedName>
        <fullName evidence="1">Urease subunit gamma</fullName>
        <ecNumber evidence="1">3.5.1.5</ecNumber>
    </recommendedName>
    <alternativeName>
        <fullName evidence="1">Urea amidohydrolase subunit gamma</fullName>
    </alternativeName>
</protein>
<reference key="1">
    <citation type="submission" date="2005-07" db="EMBL/GenBank/DDBJ databases">
        <title>Complete sequence of Synechococcus sp. CC9605.</title>
        <authorList>
            <consortium name="US DOE Joint Genome Institute"/>
            <person name="Copeland A."/>
            <person name="Lucas S."/>
            <person name="Lapidus A."/>
            <person name="Barry K."/>
            <person name="Detter J.C."/>
            <person name="Glavina T."/>
            <person name="Hammon N."/>
            <person name="Israni S."/>
            <person name="Pitluck S."/>
            <person name="Schmutz J."/>
            <person name="Martinez M."/>
            <person name="Larimer F."/>
            <person name="Land M."/>
            <person name="Kyrpides N."/>
            <person name="Ivanova N."/>
            <person name="Richardson P."/>
        </authorList>
    </citation>
    <scope>NUCLEOTIDE SEQUENCE [LARGE SCALE GENOMIC DNA]</scope>
    <source>
        <strain>CC9605</strain>
    </source>
</reference>
<accession>Q3AGD2</accession>
<proteinExistence type="inferred from homology"/>
<gene>
    <name evidence="1" type="primary">ureA</name>
    <name type="ordered locus">Syncc9605_2625</name>
</gene>